<gene>
    <name type="primary">RAS2</name>
</gene>
<feature type="chain" id="PRO_0000082671" description="Ras-like protein RAS2">
    <location>
        <begin position="1"/>
        <end position="189"/>
    </location>
</feature>
<feature type="propeptide" id="PRO_0000281319" description="Removed in mature form" evidence="1">
    <location>
        <begin position="190"/>
        <end position="192"/>
    </location>
</feature>
<feature type="short sequence motif" description="Effector region">
    <location>
        <begin position="37"/>
        <end position="45"/>
    </location>
</feature>
<feature type="binding site" evidence="1">
    <location>
        <begin position="15"/>
        <end position="22"/>
    </location>
    <ligand>
        <name>GTP</name>
        <dbReference type="ChEBI" id="CHEBI:37565"/>
    </ligand>
</feature>
<feature type="binding site" evidence="1">
    <location>
        <begin position="62"/>
        <end position="66"/>
    </location>
    <ligand>
        <name>GTP</name>
        <dbReference type="ChEBI" id="CHEBI:37565"/>
    </ligand>
</feature>
<feature type="binding site" evidence="1">
    <location>
        <begin position="121"/>
        <end position="124"/>
    </location>
    <ligand>
        <name>GTP</name>
        <dbReference type="ChEBI" id="CHEBI:37565"/>
    </ligand>
</feature>
<feature type="modified residue" description="Cysteine methyl ester" evidence="1">
    <location>
        <position position="189"/>
    </location>
</feature>
<feature type="lipid moiety-binding region" description="S-geranylgeranyl cysteine" evidence="1">
    <location>
        <position position="189"/>
    </location>
</feature>
<protein>
    <recommendedName>
        <fullName>Ras-like protein RAS2</fullName>
        <ecNumber evidence="2">3.6.5.2</ecNumber>
    </recommendedName>
</protein>
<organism>
    <name type="scientific">Hydra vulgaris</name>
    <name type="common">Hydra</name>
    <name type="synonym">Hydra attenuata</name>
    <dbReference type="NCBI Taxonomy" id="6087"/>
    <lineage>
        <taxon>Eukaryota</taxon>
        <taxon>Metazoa</taxon>
        <taxon>Cnidaria</taxon>
        <taxon>Hydrozoa</taxon>
        <taxon>Hydroidolina</taxon>
        <taxon>Anthoathecata</taxon>
        <taxon>Aplanulata</taxon>
        <taxon>Hydridae</taxon>
        <taxon>Hydra</taxon>
    </lineage>
</organism>
<name>RAS2_HYDVU</name>
<sequence>MSGDLDRQYKLVVVGGGGVGKSALTIQFIQSHFVQDYDPTIEDSYRKQCVIDDKVAHLDILDTAGQEEFSAMRDEYMRTGEGFLLVFSVTDRSSFDEIPRFHTQILRVKDIEEFPMILVGNKSDLENERTVSTAEAQELGRKLKVSYLESSAKQRINVDAAFHDLVRAIRNANKASVEPLRKKEKSRRCIVL</sequence>
<comment type="function">
    <text>Ras proteins bind GDP/GTP and possess intrinsic GTPase activity.</text>
</comment>
<comment type="catalytic activity">
    <reaction evidence="2">
        <text>GTP + H2O = GDP + phosphate + H(+)</text>
        <dbReference type="Rhea" id="RHEA:19669"/>
        <dbReference type="ChEBI" id="CHEBI:15377"/>
        <dbReference type="ChEBI" id="CHEBI:15378"/>
        <dbReference type="ChEBI" id="CHEBI:37565"/>
        <dbReference type="ChEBI" id="CHEBI:43474"/>
        <dbReference type="ChEBI" id="CHEBI:58189"/>
        <dbReference type="EC" id="3.6.5.2"/>
    </reaction>
</comment>
<comment type="activity regulation">
    <text>Alternates between an inactive form bound to GDP and an active form bound to GTP. Activated by a guanine nucleotide-exchange factor (GEF) and inactivated by a GTPase-activating protein (GAP).</text>
</comment>
<comment type="subcellular location">
    <subcellularLocation>
        <location evidence="3">Cell membrane</location>
        <topology evidence="3">Lipid-anchor</topology>
        <orientation evidence="3">Cytoplasmic side</orientation>
    </subcellularLocation>
</comment>
<comment type="developmental stage">
    <text>Ras2 level drops significantly just after the head is cut. The expression goes up again after 4 to 8 hours.</text>
</comment>
<comment type="similarity">
    <text evidence="3">Belongs to the small GTPase superfamily. Ras family.</text>
</comment>
<dbReference type="EC" id="3.6.5.2" evidence="2"/>
<dbReference type="EMBL" id="X70839">
    <property type="protein sequence ID" value="CAA50187.1"/>
    <property type="molecule type" value="mRNA"/>
</dbReference>
<dbReference type="PIR" id="JC4573">
    <property type="entry name" value="S32042"/>
</dbReference>
<dbReference type="SMR" id="P38976"/>
<dbReference type="OrthoDB" id="5976022at2759"/>
<dbReference type="Proteomes" id="UP000694840">
    <property type="component" value="Unplaced"/>
</dbReference>
<dbReference type="GO" id="GO:0005886">
    <property type="term" value="C:plasma membrane"/>
    <property type="evidence" value="ECO:0007669"/>
    <property type="project" value="UniProtKB-SubCell"/>
</dbReference>
<dbReference type="GO" id="GO:0003925">
    <property type="term" value="F:G protein activity"/>
    <property type="evidence" value="ECO:0007669"/>
    <property type="project" value="UniProtKB-EC"/>
</dbReference>
<dbReference type="GO" id="GO:0005525">
    <property type="term" value="F:GTP binding"/>
    <property type="evidence" value="ECO:0007669"/>
    <property type="project" value="UniProtKB-KW"/>
</dbReference>
<dbReference type="GO" id="GO:0007165">
    <property type="term" value="P:signal transduction"/>
    <property type="evidence" value="ECO:0007669"/>
    <property type="project" value="InterPro"/>
</dbReference>
<dbReference type="CDD" id="cd04145">
    <property type="entry name" value="M_R_Ras_like"/>
    <property type="match status" value="1"/>
</dbReference>
<dbReference type="FunFam" id="3.40.50.300:FF:000080">
    <property type="entry name" value="Ras-like GTPase Ras1"/>
    <property type="match status" value="1"/>
</dbReference>
<dbReference type="Gene3D" id="3.40.50.300">
    <property type="entry name" value="P-loop containing nucleotide triphosphate hydrolases"/>
    <property type="match status" value="1"/>
</dbReference>
<dbReference type="InterPro" id="IPR027417">
    <property type="entry name" value="P-loop_NTPase"/>
</dbReference>
<dbReference type="InterPro" id="IPR005225">
    <property type="entry name" value="Small_GTP-bd"/>
</dbReference>
<dbReference type="InterPro" id="IPR001806">
    <property type="entry name" value="Small_GTPase"/>
</dbReference>
<dbReference type="InterPro" id="IPR020849">
    <property type="entry name" value="Small_GTPase_Ras-type"/>
</dbReference>
<dbReference type="NCBIfam" id="TIGR00231">
    <property type="entry name" value="small_GTP"/>
    <property type="match status" value="1"/>
</dbReference>
<dbReference type="PANTHER" id="PTHR24070">
    <property type="entry name" value="RAS, DI-RAS, AND RHEB FAMILY MEMBERS OF SMALL GTPASE SUPERFAMILY"/>
    <property type="match status" value="1"/>
</dbReference>
<dbReference type="Pfam" id="PF00071">
    <property type="entry name" value="Ras"/>
    <property type="match status" value="1"/>
</dbReference>
<dbReference type="PRINTS" id="PR00449">
    <property type="entry name" value="RASTRNSFRMNG"/>
</dbReference>
<dbReference type="SMART" id="SM00175">
    <property type="entry name" value="RAB"/>
    <property type="match status" value="1"/>
</dbReference>
<dbReference type="SMART" id="SM00176">
    <property type="entry name" value="RAN"/>
    <property type="match status" value="1"/>
</dbReference>
<dbReference type="SMART" id="SM00173">
    <property type="entry name" value="RAS"/>
    <property type="match status" value="1"/>
</dbReference>
<dbReference type="SMART" id="SM00174">
    <property type="entry name" value="RHO"/>
    <property type="match status" value="1"/>
</dbReference>
<dbReference type="SUPFAM" id="SSF52540">
    <property type="entry name" value="P-loop containing nucleoside triphosphate hydrolases"/>
    <property type="match status" value="1"/>
</dbReference>
<dbReference type="PROSITE" id="PS51421">
    <property type="entry name" value="RAS"/>
    <property type="match status" value="1"/>
</dbReference>
<proteinExistence type="evidence at transcript level"/>
<evidence type="ECO:0000250" key="1"/>
<evidence type="ECO:0000250" key="2">
    <source>
        <dbReference type="UniProtKB" id="P01112"/>
    </source>
</evidence>
<evidence type="ECO:0000305" key="3"/>
<accession>P38976</accession>
<keyword id="KW-1003">Cell membrane</keyword>
<keyword id="KW-0342">GTP-binding</keyword>
<keyword id="KW-0378">Hydrolase</keyword>
<keyword id="KW-0449">Lipoprotein</keyword>
<keyword id="KW-0472">Membrane</keyword>
<keyword id="KW-0488">Methylation</keyword>
<keyword id="KW-0547">Nucleotide-binding</keyword>
<keyword id="KW-0636">Prenylation</keyword>
<keyword id="KW-1185">Reference proteome</keyword>
<reference key="1">
    <citation type="journal article" date="1995" name="Gene">
        <title>Cloning of a ras-related gene from Hydra which responds to head-specific signals.</title>
        <authorList>
            <person name="Bosch T.C.G."/>
            <person name="Benitez E."/>
            <person name="Gellner K."/>
            <person name="Praetzel G."/>
            <person name="Salgado L.M."/>
        </authorList>
    </citation>
    <scope>NUCLEOTIDE SEQUENCE [MRNA]</scope>
    <source>
        <strain>105</strain>
    </source>
</reference>